<accession>B3ER80</accession>
<reference key="1">
    <citation type="journal article" date="2010" name="J. Bacteriol.">
        <title>The genome of the amoeba symbiont 'Candidatus Amoebophilus asiaticus' reveals common mechanisms for host cell interaction among amoeba-associated bacteria.</title>
        <authorList>
            <person name="Schmitz-Esser S."/>
            <person name="Tischler P."/>
            <person name="Arnold R."/>
            <person name="Montanaro J."/>
            <person name="Wagner M."/>
            <person name="Rattei T."/>
            <person name="Horn M."/>
        </authorList>
    </citation>
    <scope>NUCLEOTIDE SEQUENCE [LARGE SCALE GENOMIC DNA]</scope>
    <source>
        <strain>5a2</strain>
    </source>
</reference>
<evidence type="ECO:0000255" key="1">
    <source>
        <dbReference type="HAMAP-Rule" id="MF_00634"/>
    </source>
</evidence>
<organism>
    <name type="scientific">Amoebophilus asiaticus (strain 5a2)</name>
    <dbReference type="NCBI Taxonomy" id="452471"/>
    <lineage>
        <taxon>Bacteria</taxon>
        <taxon>Pseudomonadati</taxon>
        <taxon>Bacteroidota</taxon>
        <taxon>Cytophagia</taxon>
        <taxon>Cytophagales</taxon>
        <taxon>Amoebophilaceae</taxon>
        <taxon>Candidatus Amoebophilus</taxon>
    </lineage>
</organism>
<gene>
    <name type="ordered locus">Aasi_0294</name>
</gene>
<sequence length="97" mass="10740">MSIVIEVKAIPKSKISAITIDKLGRLCIRITSAPENGKANREIIKLIAKTLKLPQANVEIIAGLTIKLKRIRITSSFLNEGELMNALLPSMQQKLFE</sequence>
<feature type="chain" id="PRO_1000212344" description="UPF0235 protein Aasi_0294">
    <location>
        <begin position="1"/>
        <end position="97"/>
    </location>
</feature>
<dbReference type="EMBL" id="CP001102">
    <property type="protein sequence ID" value="ACE05732.1"/>
    <property type="molecule type" value="Genomic_DNA"/>
</dbReference>
<dbReference type="RefSeq" id="WP_012472495.1">
    <property type="nucleotide sequence ID" value="NC_010830.1"/>
</dbReference>
<dbReference type="SMR" id="B3ER80"/>
<dbReference type="STRING" id="452471.Aasi_0294"/>
<dbReference type="KEGG" id="aas:Aasi_0294"/>
<dbReference type="eggNOG" id="COG1872">
    <property type="taxonomic scope" value="Bacteria"/>
</dbReference>
<dbReference type="HOGENOM" id="CLU_130694_6_0_10"/>
<dbReference type="OrthoDB" id="9800587at2"/>
<dbReference type="Proteomes" id="UP000001227">
    <property type="component" value="Chromosome"/>
</dbReference>
<dbReference type="GO" id="GO:0005737">
    <property type="term" value="C:cytoplasm"/>
    <property type="evidence" value="ECO:0007669"/>
    <property type="project" value="TreeGrafter"/>
</dbReference>
<dbReference type="Gene3D" id="3.30.1200.10">
    <property type="entry name" value="YggU-like"/>
    <property type="match status" value="1"/>
</dbReference>
<dbReference type="HAMAP" id="MF_00634">
    <property type="entry name" value="UPF0235"/>
    <property type="match status" value="1"/>
</dbReference>
<dbReference type="InterPro" id="IPR003746">
    <property type="entry name" value="DUF167"/>
</dbReference>
<dbReference type="InterPro" id="IPR036591">
    <property type="entry name" value="YggU-like_sf"/>
</dbReference>
<dbReference type="NCBIfam" id="TIGR00251">
    <property type="entry name" value="DUF167 family protein"/>
    <property type="match status" value="1"/>
</dbReference>
<dbReference type="PANTHER" id="PTHR13420">
    <property type="entry name" value="UPF0235 PROTEIN C15ORF40"/>
    <property type="match status" value="1"/>
</dbReference>
<dbReference type="PANTHER" id="PTHR13420:SF7">
    <property type="entry name" value="UPF0235 PROTEIN C15ORF40"/>
    <property type="match status" value="1"/>
</dbReference>
<dbReference type="Pfam" id="PF02594">
    <property type="entry name" value="DUF167"/>
    <property type="match status" value="1"/>
</dbReference>
<dbReference type="SMART" id="SM01152">
    <property type="entry name" value="DUF167"/>
    <property type="match status" value="1"/>
</dbReference>
<dbReference type="SUPFAM" id="SSF69786">
    <property type="entry name" value="YggU-like"/>
    <property type="match status" value="1"/>
</dbReference>
<keyword id="KW-1185">Reference proteome</keyword>
<name>Y294_AMOA5</name>
<protein>
    <recommendedName>
        <fullName evidence="1">UPF0235 protein Aasi_0294</fullName>
    </recommendedName>
</protein>
<comment type="similarity">
    <text evidence="1">Belongs to the UPF0235 family.</text>
</comment>
<proteinExistence type="inferred from homology"/>